<feature type="chain" id="PRO_0000225291" description="DNA-directed RNA polymerase subunit alpha">
    <location>
        <begin position="1"/>
        <end position="333"/>
    </location>
</feature>
<feature type="region of interest" description="Alpha N-terminal domain (alpha-NTD)" evidence="1">
    <location>
        <begin position="1"/>
        <end position="234"/>
    </location>
</feature>
<feature type="region of interest" description="Alpha C-terminal domain (alpha-CTD)" evidence="1">
    <location>
        <begin position="248"/>
        <end position="333"/>
    </location>
</feature>
<proteinExistence type="inferred from homology"/>
<reference key="1">
    <citation type="journal article" date="2005" name="Nat. Biotechnol.">
        <title>Complete genome sequence of the plant commensal Pseudomonas fluorescens Pf-5.</title>
        <authorList>
            <person name="Paulsen I.T."/>
            <person name="Press C.M."/>
            <person name="Ravel J."/>
            <person name="Kobayashi D.Y."/>
            <person name="Myers G.S.A."/>
            <person name="Mavrodi D.V."/>
            <person name="DeBoy R.T."/>
            <person name="Seshadri R."/>
            <person name="Ren Q."/>
            <person name="Madupu R."/>
            <person name="Dodson R.J."/>
            <person name="Durkin A.S."/>
            <person name="Brinkac L.M."/>
            <person name="Daugherty S.C."/>
            <person name="Sullivan S.A."/>
            <person name="Rosovitz M.J."/>
            <person name="Gwinn M.L."/>
            <person name="Zhou L."/>
            <person name="Schneider D.J."/>
            <person name="Cartinhour S.W."/>
            <person name="Nelson W.C."/>
            <person name="Weidman J."/>
            <person name="Watkins K."/>
            <person name="Tran K."/>
            <person name="Khouri H."/>
            <person name="Pierson E.A."/>
            <person name="Pierson L.S. III"/>
            <person name="Thomashow L.S."/>
            <person name="Loper J.E."/>
        </authorList>
    </citation>
    <scope>NUCLEOTIDE SEQUENCE [LARGE SCALE GENOMIC DNA]</scope>
    <source>
        <strain>ATCC BAA-477 / NRRL B-23932 / Pf-5</strain>
    </source>
</reference>
<accession>Q4K557</accession>
<keyword id="KW-0240">DNA-directed RNA polymerase</keyword>
<keyword id="KW-0548">Nucleotidyltransferase</keyword>
<keyword id="KW-0804">Transcription</keyword>
<keyword id="KW-0808">Transferase</keyword>
<protein>
    <recommendedName>
        <fullName evidence="1">DNA-directed RNA polymerase subunit alpha</fullName>
        <shortName evidence="1">RNAP subunit alpha</shortName>
        <ecNumber evidence="1">2.7.7.6</ecNumber>
    </recommendedName>
    <alternativeName>
        <fullName evidence="1">RNA polymerase subunit alpha</fullName>
    </alternativeName>
    <alternativeName>
        <fullName evidence="1">Transcriptase subunit alpha</fullName>
    </alternativeName>
</protein>
<comment type="function">
    <text evidence="1">DNA-dependent RNA polymerase catalyzes the transcription of DNA into RNA using the four ribonucleoside triphosphates as substrates.</text>
</comment>
<comment type="catalytic activity">
    <reaction evidence="1">
        <text>RNA(n) + a ribonucleoside 5'-triphosphate = RNA(n+1) + diphosphate</text>
        <dbReference type="Rhea" id="RHEA:21248"/>
        <dbReference type="Rhea" id="RHEA-COMP:14527"/>
        <dbReference type="Rhea" id="RHEA-COMP:17342"/>
        <dbReference type="ChEBI" id="CHEBI:33019"/>
        <dbReference type="ChEBI" id="CHEBI:61557"/>
        <dbReference type="ChEBI" id="CHEBI:140395"/>
        <dbReference type="EC" id="2.7.7.6"/>
    </reaction>
</comment>
<comment type="subunit">
    <text evidence="1">Homodimer. The RNAP catalytic core consists of 2 alpha, 1 beta, 1 beta' and 1 omega subunit. When a sigma factor is associated with the core the holoenzyme is formed, which can initiate transcription.</text>
</comment>
<comment type="domain">
    <text evidence="1">The N-terminal domain is essential for RNAP assembly and basal transcription, whereas the C-terminal domain is involved in interaction with transcriptional regulators and with upstream promoter elements.</text>
</comment>
<comment type="similarity">
    <text evidence="1">Belongs to the RNA polymerase alpha chain family.</text>
</comment>
<sequence>MQISVNEFLTPRHIDVQVVSPTRAKITLEPLERGFGHTLGNALRRILLSSMPGCAVVEAEIDGVLHEYSAIEGVQEDVIEILLNLKGLAIKLHGRDEVTLTLSKKGSGVVTAADIQLDHDVEIVNPDHVIANLASNGALNMKLVVARGRGYEPADSRQSDEDESRSIGRLQLDSSFSPVRRIAYVVENARVEQRTNLDKLVIDLETNGTLDPEEAIRRAATILQQQLAAFVDLKGDSEPVVVEQEDEIDPILLRPVDDLELTVRSANCLKAENIYYIGDLIQRTEVELLKTPNLGKKSLTEIKDVLASRGLSLGMRLDNWPPASLKKDDKATA</sequence>
<gene>
    <name evidence="1" type="primary">rpoA</name>
    <name type="ordered locus">PFL_5558</name>
</gene>
<name>RPOA_PSEF5</name>
<dbReference type="EC" id="2.7.7.6" evidence="1"/>
<dbReference type="EMBL" id="CP000076">
    <property type="protein sequence ID" value="AAY94764.1"/>
    <property type="molecule type" value="Genomic_DNA"/>
</dbReference>
<dbReference type="RefSeq" id="WP_007970428.1">
    <property type="nucleotide sequence ID" value="NC_004129.6"/>
</dbReference>
<dbReference type="SMR" id="Q4K557"/>
<dbReference type="STRING" id="220664.PFL_5558"/>
<dbReference type="GeneID" id="72197494"/>
<dbReference type="KEGG" id="pfl:PFL_5558"/>
<dbReference type="eggNOG" id="COG0202">
    <property type="taxonomic scope" value="Bacteria"/>
</dbReference>
<dbReference type="HOGENOM" id="CLU_053084_0_0_6"/>
<dbReference type="Proteomes" id="UP000008540">
    <property type="component" value="Chromosome"/>
</dbReference>
<dbReference type="GO" id="GO:0005737">
    <property type="term" value="C:cytoplasm"/>
    <property type="evidence" value="ECO:0007669"/>
    <property type="project" value="UniProtKB-ARBA"/>
</dbReference>
<dbReference type="GO" id="GO:0000428">
    <property type="term" value="C:DNA-directed RNA polymerase complex"/>
    <property type="evidence" value="ECO:0007669"/>
    <property type="project" value="UniProtKB-KW"/>
</dbReference>
<dbReference type="GO" id="GO:0003677">
    <property type="term" value="F:DNA binding"/>
    <property type="evidence" value="ECO:0007669"/>
    <property type="project" value="UniProtKB-UniRule"/>
</dbReference>
<dbReference type="GO" id="GO:0003899">
    <property type="term" value="F:DNA-directed RNA polymerase activity"/>
    <property type="evidence" value="ECO:0007669"/>
    <property type="project" value="UniProtKB-UniRule"/>
</dbReference>
<dbReference type="GO" id="GO:0046983">
    <property type="term" value="F:protein dimerization activity"/>
    <property type="evidence" value="ECO:0007669"/>
    <property type="project" value="InterPro"/>
</dbReference>
<dbReference type="GO" id="GO:0006351">
    <property type="term" value="P:DNA-templated transcription"/>
    <property type="evidence" value="ECO:0007669"/>
    <property type="project" value="UniProtKB-UniRule"/>
</dbReference>
<dbReference type="CDD" id="cd06928">
    <property type="entry name" value="RNAP_alpha_NTD"/>
    <property type="match status" value="1"/>
</dbReference>
<dbReference type="FunFam" id="1.10.150.20:FF:000001">
    <property type="entry name" value="DNA-directed RNA polymerase subunit alpha"/>
    <property type="match status" value="1"/>
</dbReference>
<dbReference type="FunFam" id="2.170.120.12:FF:000001">
    <property type="entry name" value="DNA-directed RNA polymerase subunit alpha"/>
    <property type="match status" value="1"/>
</dbReference>
<dbReference type="Gene3D" id="1.10.150.20">
    <property type="entry name" value="5' to 3' exonuclease, C-terminal subdomain"/>
    <property type="match status" value="1"/>
</dbReference>
<dbReference type="Gene3D" id="2.170.120.12">
    <property type="entry name" value="DNA-directed RNA polymerase, insert domain"/>
    <property type="match status" value="1"/>
</dbReference>
<dbReference type="Gene3D" id="3.30.1360.10">
    <property type="entry name" value="RNA polymerase, RBP11-like subunit"/>
    <property type="match status" value="1"/>
</dbReference>
<dbReference type="HAMAP" id="MF_00059">
    <property type="entry name" value="RNApol_bact_RpoA"/>
    <property type="match status" value="1"/>
</dbReference>
<dbReference type="InterPro" id="IPR011262">
    <property type="entry name" value="DNA-dir_RNA_pol_insert"/>
</dbReference>
<dbReference type="InterPro" id="IPR011263">
    <property type="entry name" value="DNA-dir_RNA_pol_RpoA/D/Rpb3"/>
</dbReference>
<dbReference type="InterPro" id="IPR011773">
    <property type="entry name" value="DNA-dir_RpoA"/>
</dbReference>
<dbReference type="InterPro" id="IPR036603">
    <property type="entry name" value="RBP11-like"/>
</dbReference>
<dbReference type="InterPro" id="IPR011260">
    <property type="entry name" value="RNAP_asu_C"/>
</dbReference>
<dbReference type="InterPro" id="IPR036643">
    <property type="entry name" value="RNApol_insert_sf"/>
</dbReference>
<dbReference type="NCBIfam" id="NF003513">
    <property type="entry name" value="PRK05182.1-2"/>
    <property type="match status" value="1"/>
</dbReference>
<dbReference type="NCBIfam" id="NF003519">
    <property type="entry name" value="PRK05182.2-5"/>
    <property type="match status" value="1"/>
</dbReference>
<dbReference type="NCBIfam" id="TIGR02027">
    <property type="entry name" value="rpoA"/>
    <property type="match status" value="1"/>
</dbReference>
<dbReference type="Pfam" id="PF01000">
    <property type="entry name" value="RNA_pol_A_bac"/>
    <property type="match status" value="1"/>
</dbReference>
<dbReference type="Pfam" id="PF03118">
    <property type="entry name" value="RNA_pol_A_CTD"/>
    <property type="match status" value="1"/>
</dbReference>
<dbReference type="Pfam" id="PF01193">
    <property type="entry name" value="RNA_pol_L"/>
    <property type="match status" value="1"/>
</dbReference>
<dbReference type="SMART" id="SM00662">
    <property type="entry name" value="RPOLD"/>
    <property type="match status" value="1"/>
</dbReference>
<dbReference type="SUPFAM" id="SSF47789">
    <property type="entry name" value="C-terminal domain of RNA polymerase alpha subunit"/>
    <property type="match status" value="1"/>
</dbReference>
<dbReference type="SUPFAM" id="SSF56553">
    <property type="entry name" value="Insert subdomain of RNA polymerase alpha subunit"/>
    <property type="match status" value="1"/>
</dbReference>
<dbReference type="SUPFAM" id="SSF55257">
    <property type="entry name" value="RBP11-like subunits of RNA polymerase"/>
    <property type="match status" value="1"/>
</dbReference>
<organism>
    <name type="scientific">Pseudomonas fluorescens (strain ATCC BAA-477 / NRRL B-23932 / Pf-5)</name>
    <dbReference type="NCBI Taxonomy" id="220664"/>
    <lineage>
        <taxon>Bacteria</taxon>
        <taxon>Pseudomonadati</taxon>
        <taxon>Pseudomonadota</taxon>
        <taxon>Gammaproteobacteria</taxon>
        <taxon>Pseudomonadales</taxon>
        <taxon>Pseudomonadaceae</taxon>
        <taxon>Pseudomonas</taxon>
    </lineage>
</organism>
<evidence type="ECO:0000255" key="1">
    <source>
        <dbReference type="HAMAP-Rule" id="MF_00059"/>
    </source>
</evidence>